<accession>Q7MAK6</accession>
<gene>
    <name evidence="1" type="primary">argS</name>
    <name type="ordered locus">WS0186</name>
</gene>
<proteinExistence type="inferred from homology"/>
<sequence>MHHTIKHLLETTLGFSVVLEKPKDKNHGHYATPAAFSLAKELKKNPALIAQELSKKLSEIEVFESVQSVGGYINFRLKQGFLDAQASLALSQGREFGKGDKQGSILLEYVSANPTGPLHIGHARGAVLGDALSRIGRHLGYALETEYYVNDAGNQIHLLGLSIYLAGRDSLLSLPVTYPEQYYRGEYIVDIAKEALKKWGEKAFADEAFIPELSLFGKELMLEEIRSNLADTHIHFDHYVSEKSLYPRWEETYALLQSHQGCYEGGGKVWLRSSAHGDEKDRVIVRESGEPTYLAGDIIYHADKFARPYDRYINIWGADHHGYIARVKAAIEFLGHDSSKLEVLLSQMVTLLKGGQPYKMSKRAGNFILMRDVLEDIGADALRFIFLSKKPDTHLEFDVDDLNKEDSSNPIFYINYAHARIHTMLGKSSLDSQEIEAASLEGLEDSIFDLLFLSLQLPQVLEDSFENRAIQKVAEYLRALAGEFHKFYNEHKILETPQEAALLKVCKVVALSLSQGLALLGITAKERM</sequence>
<comment type="catalytic activity">
    <reaction evidence="1">
        <text>tRNA(Arg) + L-arginine + ATP = L-arginyl-tRNA(Arg) + AMP + diphosphate</text>
        <dbReference type="Rhea" id="RHEA:20301"/>
        <dbReference type="Rhea" id="RHEA-COMP:9658"/>
        <dbReference type="Rhea" id="RHEA-COMP:9673"/>
        <dbReference type="ChEBI" id="CHEBI:30616"/>
        <dbReference type="ChEBI" id="CHEBI:32682"/>
        <dbReference type="ChEBI" id="CHEBI:33019"/>
        <dbReference type="ChEBI" id="CHEBI:78442"/>
        <dbReference type="ChEBI" id="CHEBI:78513"/>
        <dbReference type="ChEBI" id="CHEBI:456215"/>
        <dbReference type="EC" id="6.1.1.19"/>
    </reaction>
</comment>
<comment type="subunit">
    <text evidence="1">Monomer.</text>
</comment>
<comment type="subcellular location">
    <subcellularLocation>
        <location evidence="1">Cytoplasm</location>
    </subcellularLocation>
</comment>
<comment type="similarity">
    <text evidence="1">Belongs to the class-I aminoacyl-tRNA synthetase family.</text>
</comment>
<keyword id="KW-0030">Aminoacyl-tRNA synthetase</keyword>
<keyword id="KW-0067">ATP-binding</keyword>
<keyword id="KW-0963">Cytoplasm</keyword>
<keyword id="KW-0436">Ligase</keyword>
<keyword id="KW-0547">Nucleotide-binding</keyword>
<keyword id="KW-0648">Protein biosynthesis</keyword>
<keyword id="KW-1185">Reference proteome</keyword>
<dbReference type="EC" id="6.1.1.19" evidence="1"/>
<dbReference type="EMBL" id="BX571657">
    <property type="protein sequence ID" value="CAE09347.1"/>
    <property type="molecule type" value="Genomic_DNA"/>
</dbReference>
<dbReference type="RefSeq" id="WP_011138147.1">
    <property type="nucleotide sequence ID" value="NC_005090.1"/>
</dbReference>
<dbReference type="SMR" id="Q7MAK6"/>
<dbReference type="STRING" id="273121.WS0186"/>
<dbReference type="KEGG" id="wsu:WS0186"/>
<dbReference type="eggNOG" id="COG0018">
    <property type="taxonomic scope" value="Bacteria"/>
</dbReference>
<dbReference type="HOGENOM" id="CLU_006406_0_1_7"/>
<dbReference type="Proteomes" id="UP000000422">
    <property type="component" value="Chromosome"/>
</dbReference>
<dbReference type="GO" id="GO:0005737">
    <property type="term" value="C:cytoplasm"/>
    <property type="evidence" value="ECO:0007669"/>
    <property type="project" value="UniProtKB-SubCell"/>
</dbReference>
<dbReference type="GO" id="GO:0004814">
    <property type="term" value="F:arginine-tRNA ligase activity"/>
    <property type="evidence" value="ECO:0007669"/>
    <property type="project" value="UniProtKB-UniRule"/>
</dbReference>
<dbReference type="GO" id="GO:0005524">
    <property type="term" value="F:ATP binding"/>
    <property type="evidence" value="ECO:0007669"/>
    <property type="project" value="UniProtKB-UniRule"/>
</dbReference>
<dbReference type="GO" id="GO:0006420">
    <property type="term" value="P:arginyl-tRNA aminoacylation"/>
    <property type="evidence" value="ECO:0007669"/>
    <property type="project" value="UniProtKB-UniRule"/>
</dbReference>
<dbReference type="CDD" id="cd00671">
    <property type="entry name" value="ArgRS_core"/>
    <property type="match status" value="1"/>
</dbReference>
<dbReference type="FunFam" id="3.40.50.620:FF:000062">
    <property type="entry name" value="Arginine--tRNA ligase"/>
    <property type="match status" value="1"/>
</dbReference>
<dbReference type="Gene3D" id="3.30.1360.70">
    <property type="entry name" value="Arginyl tRNA synthetase N-terminal domain"/>
    <property type="match status" value="1"/>
</dbReference>
<dbReference type="Gene3D" id="3.40.50.620">
    <property type="entry name" value="HUPs"/>
    <property type="match status" value="1"/>
</dbReference>
<dbReference type="Gene3D" id="1.10.730.10">
    <property type="entry name" value="Isoleucyl-tRNA Synthetase, Domain 1"/>
    <property type="match status" value="1"/>
</dbReference>
<dbReference type="HAMAP" id="MF_00123">
    <property type="entry name" value="Arg_tRNA_synth"/>
    <property type="match status" value="1"/>
</dbReference>
<dbReference type="InterPro" id="IPR001412">
    <property type="entry name" value="aa-tRNA-synth_I_CS"/>
</dbReference>
<dbReference type="InterPro" id="IPR001278">
    <property type="entry name" value="Arg-tRNA-ligase"/>
</dbReference>
<dbReference type="InterPro" id="IPR005148">
    <property type="entry name" value="Arg-tRNA-synth_N"/>
</dbReference>
<dbReference type="InterPro" id="IPR036695">
    <property type="entry name" value="Arg-tRNA-synth_N_sf"/>
</dbReference>
<dbReference type="InterPro" id="IPR035684">
    <property type="entry name" value="ArgRS_core"/>
</dbReference>
<dbReference type="InterPro" id="IPR008909">
    <property type="entry name" value="DALR_anticod-bd"/>
</dbReference>
<dbReference type="InterPro" id="IPR014729">
    <property type="entry name" value="Rossmann-like_a/b/a_fold"/>
</dbReference>
<dbReference type="InterPro" id="IPR009080">
    <property type="entry name" value="tRNAsynth_Ia_anticodon-bd"/>
</dbReference>
<dbReference type="NCBIfam" id="TIGR00456">
    <property type="entry name" value="argS"/>
    <property type="match status" value="1"/>
</dbReference>
<dbReference type="PANTHER" id="PTHR11956:SF5">
    <property type="entry name" value="ARGININE--TRNA LIGASE, CYTOPLASMIC"/>
    <property type="match status" value="1"/>
</dbReference>
<dbReference type="PANTHER" id="PTHR11956">
    <property type="entry name" value="ARGINYL-TRNA SYNTHETASE"/>
    <property type="match status" value="1"/>
</dbReference>
<dbReference type="Pfam" id="PF03485">
    <property type="entry name" value="Arg_tRNA_synt_N"/>
    <property type="match status" value="1"/>
</dbReference>
<dbReference type="Pfam" id="PF05746">
    <property type="entry name" value="DALR_1"/>
    <property type="match status" value="1"/>
</dbReference>
<dbReference type="Pfam" id="PF00750">
    <property type="entry name" value="tRNA-synt_1d"/>
    <property type="match status" value="1"/>
</dbReference>
<dbReference type="PRINTS" id="PR01038">
    <property type="entry name" value="TRNASYNTHARG"/>
</dbReference>
<dbReference type="SMART" id="SM01016">
    <property type="entry name" value="Arg_tRNA_synt_N"/>
    <property type="match status" value="1"/>
</dbReference>
<dbReference type="SMART" id="SM00836">
    <property type="entry name" value="DALR_1"/>
    <property type="match status" value="1"/>
</dbReference>
<dbReference type="SUPFAM" id="SSF47323">
    <property type="entry name" value="Anticodon-binding domain of a subclass of class I aminoacyl-tRNA synthetases"/>
    <property type="match status" value="1"/>
</dbReference>
<dbReference type="SUPFAM" id="SSF55190">
    <property type="entry name" value="Arginyl-tRNA synthetase (ArgRS), N-terminal 'additional' domain"/>
    <property type="match status" value="1"/>
</dbReference>
<dbReference type="SUPFAM" id="SSF52374">
    <property type="entry name" value="Nucleotidylyl transferase"/>
    <property type="match status" value="1"/>
</dbReference>
<dbReference type="PROSITE" id="PS00178">
    <property type="entry name" value="AA_TRNA_LIGASE_I"/>
    <property type="match status" value="1"/>
</dbReference>
<feature type="chain" id="PRO_0000242122" description="Arginine--tRNA ligase">
    <location>
        <begin position="1"/>
        <end position="528"/>
    </location>
</feature>
<feature type="short sequence motif" description="'HIGH' region">
    <location>
        <begin position="112"/>
        <end position="122"/>
    </location>
</feature>
<organism>
    <name type="scientific">Wolinella succinogenes (strain ATCC 29543 / DSM 1740 / CCUG 13145 / JCM 31913 / LMG 7466 / NCTC 11488 / FDC 602W)</name>
    <name type="common">Vibrio succinogenes</name>
    <dbReference type="NCBI Taxonomy" id="273121"/>
    <lineage>
        <taxon>Bacteria</taxon>
        <taxon>Pseudomonadati</taxon>
        <taxon>Campylobacterota</taxon>
        <taxon>Epsilonproteobacteria</taxon>
        <taxon>Campylobacterales</taxon>
        <taxon>Helicobacteraceae</taxon>
        <taxon>Wolinella</taxon>
    </lineage>
</organism>
<evidence type="ECO:0000255" key="1">
    <source>
        <dbReference type="HAMAP-Rule" id="MF_00123"/>
    </source>
</evidence>
<reference key="1">
    <citation type="journal article" date="2003" name="Proc. Natl. Acad. Sci. U.S.A.">
        <title>Complete genome sequence and analysis of Wolinella succinogenes.</title>
        <authorList>
            <person name="Baar C."/>
            <person name="Eppinger M."/>
            <person name="Raddatz G."/>
            <person name="Simon J."/>
            <person name="Lanz C."/>
            <person name="Klimmek O."/>
            <person name="Nandakumar R."/>
            <person name="Gross R."/>
            <person name="Rosinus A."/>
            <person name="Keller H."/>
            <person name="Jagtap P."/>
            <person name="Linke B."/>
            <person name="Meyer F."/>
            <person name="Lederer H."/>
            <person name="Schuster S.C."/>
        </authorList>
    </citation>
    <scope>NUCLEOTIDE SEQUENCE [LARGE SCALE GENOMIC DNA]</scope>
    <source>
        <strain>ATCC 29543 / DSM 1740 / CCUG 13145 / JCM 31913 / LMG 7466 / NCTC 11488 / FDC 602W</strain>
    </source>
</reference>
<name>SYR_WOLSU</name>
<protein>
    <recommendedName>
        <fullName evidence="1">Arginine--tRNA ligase</fullName>
        <ecNumber evidence="1">6.1.1.19</ecNumber>
    </recommendedName>
    <alternativeName>
        <fullName evidence="1">Arginyl-tRNA synthetase</fullName>
        <shortName evidence="1">ArgRS</shortName>
    </alternativeName>
</protein>